<accession>Q92ZT1</accession>
<organism>
    <name type="scientific">Rhizobium meliloti (strain 1021)</name>
    <name type="common">Ensifer meliloti</name>
    <name type="synonym">Sinorhizobium meliloti</name>
    <dbReference type="NCBI Taxonomy" id="266834"/>
    <lineage>
        <taxon>Bacteria</taxon>
        <taxon>Pseudomonadati</taxon>
        <taxon>Pseudomonadota</taxon>
        <taxon>Alphaproteobacteria</taxon>
        <taxon>Hyphomicrobiales</taxon>
        <taxon>Rhizobiaceae</taxon>
        <taxon>Sinorhizobium/Ensifer group</taxon>
        <taxon>Sinorhizobium</taxon>
    </lineage>
</organism>
<name>OTCC_RHIME</name>
<sequence>MSFNLRNRSLLTVQDYTPREFRYLVDLARDLKRAKYARTEQEHLKGKEICLIFEKTSTRTRCAFEVACSDQGANVTYLDPAGSQIGHKESFKDTARVLGRMYDAIEYRGASQAGVETLAKYAGVPVYNGLTDEYHPTQMIADVMTMREHSDKPISEIKYAYIGDTRSNMGHSLLIVGCLMGMDVRICGPRSLWPSEEYQTIAKRLKAQSGARLMITDNPREAVEGVDFIHTDVWVSMGEPKEVWKERIQLLTPYQVNAELMAASGNPQTKFMHCLPAYHDTETTIGKQISDDYGMSDGLEVTDEVFESQANIAFEQAENRMHTIKALLVATLGD</sequence>
<evidence type="ECO:0000250" key="1"/>
<evidence type="ECO:0000255" key="2">
    <source>
        <dbReference type="HAMAP-Rule" id="MF_01109"/>
    </source>
</evidence>
<evidence type="ECO:0000305" key="3"/>
<geneLocation type="plasmid">
    <name>pSymA</name>
    <name>megaplasmid 1</name>
</geneLocation>
<reference key="1">
    <citation type="journal article" date="2001" name="Proc. Natl. Acad. Sci. U.S.A.">
        <title>Nucleotide sequence and predicted functions of the entire Sinorhizobium meliloti pSymA megaplasmid.</title>
        <authorList>
            <person name="Barnett M.J."/>
            <person name="Fisher R.F."/>
            <person name="Jones T."/>
            <person name="Komp C."/>
            <person name="Abola A.P."/>
            <person name="Barloy-Hubler F."/>
            <person name="Bowser L."/>
            <person name="Capela D."/>
            <person name="Galibert F."/>
            <person name="Gouzy J."/>
            <person name="Gurjal M."/>
            <person name="Hong A."/>
            <person name="Huizar L."/>
            <person name="Hyman R.W."/>
            <person name="Kahn D."/>
            <person name="Kahn M.L."/>
            <person name="Kalman S."/>
            <person name="Keating D.H."/>
            <person name="Palm C."/>
            <person name="Peck M.C."/>
            <person name="Surzycki R."/>
            <person name="Wells D.H."/>
            <person name="Yeh K.-C."/>
            <person name="Davis R.W."/>
            <person name="Federspiel N.A."/>
            <person name="Long S.R."/>
        </authorList>
    </citation>
    <scope>NUCLEOTIDE SEQUENCE [LARGE SCALE GENOMIC DNA]</scope>
    <source>
        <strain>1021</strain>
    </source>
</reference>
<reference key="2">
    <citation type="journal article" date="2001" name="Science">
        <title>The composite genome of the legume symbiont Sinorhizobium meliloti.</title>
        <authorList>
            <person name="Galibert F."/>
            <person name="Finan T.M."/>
            <person name="Long S.R."/>
            <person name="Puehler A."/>
            <person name="Abola P."/>
            <person name="Ampe F."/>
            <person name="Barloy-Hubler F."/>
            <person name="Barnett M.J."/>
            <person name="Becker A."/>
            <person name="Boistard P."/>
            <person name="Bothe G."/>
            <person name="Boutry M."/>
            <person name="Bowser L."/>
            <person name="Buhrmester J."/>
            <person name="Cadieu E."/>
            <person name="Capela D."/>
            <person name="Chain P."/>
            <person name="Cowie A."/>
            <person name="Davis R.W."/>
            <person name="Dreano S."/>
            <person name="Federspiel N.A."/>
            <person name="Fisher R.F."/>
            <person name="Gloux S."/>
            <person name="Godrie T."/>
            <person name="Goffeau A."/>
            <person name="Golding B."/>
            <person name="Gouzy J."/>
            <person name="Gurjal M."/>
            <person name="Hernandez-Lucas I."/>
            <person name="Hong A."/>
            <person name="Huizar L."/>
            <person name="Hyman R.W."/>
            <person name="Jones T."/>
            <person name="Kahn D."/>
            <person name="Kahn M.L."/>
            <person name="Kalman S."/>
            <person name="Keating D.H."/>
            <person name="Kiss E."/>
            <person name="Komp C."/>
            <person name="Lelaure V."/>
            <person name="Masuy D."/>
            <person name="Palm C."/>
            <person name="Peck M.C."/>
            <person name="Pohl T.M."/>
            <person name="Portetelle D."/>
            <person name="Purnelle B."/>
            <person name="Ramsperger U."/>
            <person name="Surzycki R."/>
            <person name="Thebault P."/>
            <person name="Vandenbol M."/>
            <person name="Vorhoelter F.J."/>
            <person name="Weidner S."/>
            <person name="Wells D.H."/>
            <person name="Wong K."/>
            <person name="Yeh K.-C."/>
            <person name="Batut J."/>
        </authorList>
    </citation>
    <scope>NUCLEOTIDE SEQUENCE [LARGE SCALE GENOMIC DNA]</scope>
    <source>
        <strain>1021</strain>
    </source>
</reference>
<dbReference type="EC" id="2.1.3.3"/>
<dbReference type="EMBL" id="AE006469">
    <property type="protein sequence ID" value="AAK65026.1"/>
    <property type="molecule type" value="Genomic_DNA"/>
</dbReference>
<dbReference type="PIR" id="H95307">
    <property type="entry name" value="H95307"/>
</dbReference>
<dbReference type="RefSeq" id="NP_435614.1">
    <property type="nucleotide sequence ID" value="NC_003037.1"/>
</dbReference>
<dbReference type="RefSeq" id="WP_010967360.1">
    <property type="nucleotide sequence ID" value="NC_003037.1"/>
</dbReference>
<dbReference type="SMR" id="Q92ZT1"/>
<dbReference type="EnsemblBacteria" id="AAK65026">
    <property type="protein sequence ID" value="AAK65026"/>
    <property type="gene ID" value="SMa0695"/>
</dbReference>
<dbReference type="KEGG" id="sme:SMa0695"/>
<dbReference type="PATRIC" id="fig|266834.11.peg.384"/>
<dbReference type="HOGENOM" id="CLU_043846_3_1_5"/>
<dbReference type="OrthoDB" id="9802587at2"/>
<dbReference type="UniPathway" id="UPA00254">
    <property type="reaction ID" value="UER00365"/>
</dbReference>
<dbReference type="PRO" id="PR:Q92ZT1"/>
<dbReference type="Proteomes" id="UP000001976">
    <property type="component" value="Plasmid pSymA"/>
</dbReference>
<dbReference type="GO" id="GO:0005737">
    <property type="term" value="C:cytoplasm"/>
    <property type="evidence" value="ECO:0007669"/>
    <property type="project" value="UniProtKB-SubCell"/>
</dbReference>
<dbReference type="GO" id="GO:0016597">
    <property type="term" value="F:amino acid binding"/>
    <property type="evidence" value="ECO:0007669"/>
    <property type="project" value="InterPro"/>
</dbReference>
<dbReference type="GO" id="GO:0004585">
    <property type="term" value="F:ornithine carbamoyltransferase activity"/>
    <property type="evidence" value="ECO:0007669"/>
    <property type="project" value="UniProtKB-UniRule"/>
</dbReference>
<dbReference type="GO" id="GO:0042450">
    <property type="term" value="P:arginine biosynthetic process via ornithine"/>
    <property type="evidence" value="ECO:0007669"/>
    <property type="project" value="TreeGrafter"/>
</dbReference>
<dbReference type="GO" id="GO:0019547">
    <property type="term" value="P:arginine catabolic process to ornithine"/>
    <property type="evidence" value="ECO:0007669"/>
    <property type="project" value="UniProtKB-UniPathway"/>
</dbReference>
<dbReference type="GO" id="GO:0019240">
    <property type="term" value="P:citrulline biosynthetic process"/>
    <property type="evidence" value="ECO:0007669"/>
    <property type="project" value="TreeGrafter"/>
</dbReference>
<dbReference type="GO" id="GO:0006526">
    <property type="term" value="P:L-arginine biosynthetic process"/>
    <property type="evidence" value="ECO:0007669"/>
    <property type="project" value="UniProtKB-UniRule"/>
</dbReference>
<dbReference type="FunFam" id="3.40.50.1370:FF:000008">
    <property type="entry name" value="Ornithine carbamoyltransferase"/>
    <property type="match status" value="1"/>
</dbReference>
<dbReference type="Gene3D" id="3.40.50.1370">
    <property type="entry name" value="Aspartate/ornithine carbamoyltransferase"/>
    <property type="match status" value="2"/>
</dbReference>
<dbReference type="HAMAP" id="MF_01109">
    <property type="entry name" value="OTCase"/>
    <property type="match status" value="1"/>
</dbReference>
<dbReference type="InterPro" id="IPR006132">
    <property type="entry name" value="Asp/Orn_carbamoyltranf_P-bd"/>
</dbReference>
<dbReference type="InterPro" id="IPR006130">
    <property type="entry name" value="Asp/Orn_carbamoylTrfase"/>
</dbReference>
<dbReference type="InterPro" id="IPR036901">
    <property type="entry name" value="Asp/Orn_carbamoylTrfase_sf"/>
</dbReference>
<dbReference type="InterPro" id="IPR006131">
    <property type="entry name" value="Asp_carbamoyltransf_Asp/Orn-bd"/>
</dbReference>
<dbReference type="InterPro" id="IPR002292">
    <property type="entry name" value="Orn/put_carbamltrans"/>
</dbReference>
<dbReference type="InterPro" id="IPR024904">
    <property type="entry name" value="OTCase_ArgI"/>
</dbReference>
<dbReference type="NCBIfam" id="TIGR00658">
    <property type="entry name" value="orni_carb_tr"/>
    <property type="match status" value="1"/>
</dbReference>
<dbReference type="NCBIfam" id="NF002470">
    <property type="entry name" value="PRK01713.1"/>
    <property type="match status" value="1"/>
</dbReference>
<dbReference type="PANTHER" id="PTHR45753:SF2">
    <property type="entry name" value="ORNITHINE CARBAMOYLTRANSFERASE"/>
    <property type="match status" value="1"/>
</dbReference>
<dbReference type="PANTHER" id="PTHR45753">
    <property type="entry name" value="ORNITHINE CARBAMOYLTRANSFERASE, MITOCHONDRIAL"/>
    <property type="match status" value="1"/>
</dbReference>
<dbReference type="Pfam" id="PF00185">
    <property type="entry name" value="OTCace"/>
    <property type="match status" value="1"/>
</dbReference>
<dbReference type="Pfam" id="PF02729">
    <property type="entry name" value="OTCace_N"/>
    <property type="match status" value="1"/>
</dbReference>
<dbReference type="PRINTS" id="PR00100">
    <property type="entry name" value="AOTCASE"/>
</dbReference>
<dbReference type="PRINTS" id="PR00102">
    <property type="entry name" value="OTCASE"/>
</dbReference>
<dbReference type="SUPFAM" id="SSF53671">
    <property type="entry name" value="Aspartate/ornithine carbamoyltransferase"/>
    <property type="match status" value="1"/>
</dbReference>
<dbReference type="PROSITE" id="PS00097">
    <property type="entry name" value="CARBAMOYLTRANSFERASE"/>
    <property type="match status" value="1"/>
</dbReference>
<comment type="function">
    <text evidence="1">Reversibly catalyzes the transfer of the carbamoyl group from carbamoyl phosphate (CP) to the N(epsilon) atom of ornithine (ORN) to produce L-citrulline.</text>
</comment>
<comment type="catalytic activity">
    <reaction>
        <text>carbamoyl phosphate + L-ornithine = L-citrulline + phosphate + H(+)</text>
        <dbReference type="Rhea" id="RHEA:19513"/>
        <dbReference type="ChEBI" id="CHEBI:15378"/>
        <dbReference type="ChEBI" id="CHEBI:43474"/>
        <dbReference type="ChEBI" id="CHEBI:46911"/>
        <dbReference type="ChEBI" id="CHEBI:57743"/>
        <dbReference type="ChEBI" id="CHEBI:58228"/>
        <dbReference type="EC" id="2.1.3.3"/>
    </reaction>
</comment>
<comment type="pathway">
    <text>Amino-acid degradation; L-arginine degradation via ADI pathway; carbamoyl phosphate from L-arginine: step 2/2.</text>
</comment>
<comment type="subcellular location">
    <subcellularLocation>
        <location evidence="1">Cytoplasm</location>
    </subcellularLocation>
</comment>
<comment type="similarity">
    <text evidence="3">Belongs to the aspartate/ornithine carbamoyltransferase superfamily. OTCase family.</text>
</comment>
<gene>
    <name type="primary">arcB</name>
    <name type="ordered locus">RA0368</name>
    <name type="ORF">SMa0695</name>
</gene>
<feature type="chain" id="PRO_0000112999" description="Ornithine carbamoyltransferase, catabolic">
    <location>
        <begin position="1"/>
        <end position="334"/>
    </location>
</feature>
<feature type="binding site" evidence="2">
    <location>
        <begin position="57"/>
        <end position="60"/>
    </location>
    <ligand>
        <name>carbamoyl phosphate</name>
        <dbReference type="ChEBI" id="CHEBI:58228"/>
    </ligand>
</feature>
<feature type="binding site" evidence="2">
    <location>
        <position position="84"/>
    </location>
    <ligand>
        <name>carbamoyl phosphate</name>
        <dbReference type="ChEBI" id="CHEBI:58228"/>
    </ligand>
</feature>
<feature type="binding site" evidence="2">
    <location>
        <position position="108"/>
    </location>
    <ligand>
        <name>carbamoyl phosphate</name>
        <dbReference type="ChEBI" id="CHEBI:58228"/>
    </ligand>
</feature>
<feature type="binding site" evidence="2">
    <location>
        <begin position="135"/>
        <end position="138"/>
    </location>
    <ligand>
        <name>carbamoyl phosphate</name>
        <dbReference type="ChEBI" id="CHEBI:58228"/>
    </ligand>
</feature>
<feature type="binding site" evidence="2">
    <location>
        <position position="168"/>
    </location>
    <ligand>
        <name>L-ornithine</name>
        <dbReference type="ChEBI" id="CHEBI:46911"/>
    </ligand>
</feature>
<feature type="binding site" evidence="2">
    <location>
        <position position="232"/>
    </location>
    <ligand>
        <name>L-ornithine</name>
        <dbReference type="ChEBI" id="CHEBI:46911"/>
    </ligand>
</feature>
<feature type="binding site" evidence="2">
    <location>
        <begin position="236"/>
        <end position="237"/>
    </location>
    <ligand>
        <name>L-ornithine</name>
        <dbReference type="ChEBI" id="CHEBI:46911"/>
    </ligand>
</feature>
<feature type="binding site" evidence="2">
    <location>
        <begin position="274"/>
        <end position="275"/>
    </location>
    <ligand>
        <name>carbamoyl phosphate</name>
        <dbReference type="ChEBI" id="CHEBI:58228"/>
    </ligand>
</feature>
<feature type="binding site" evidence="2">
    <location>
        <position position="320"/>
    </location>
    <ligand>
        <name>carbamoyl phosphate</name>
        <dbReference type="ChEBI" id="CHEBI:58228"/>
    </ligand>
</feature>
<keyword id="KW-0056">Arginine metabolism</keyword>
<keyword id="KW-0963">Cytoplasm</keyword>
<keyword id="KW-0614">Plasmid</keyword>
<keyword id="KW-1185">Reference proteome</keyword>
<keyword id="KW-0808">Transferase</keyword>
<protein>
    <recommendedName>
        <fullName>Ornithine carbamoyltransferase, catabolic</fullName>
        <shortName>OTCase</shortName>
        <ecNumber>2.1.3.3</ecNumber>
    </recommendedName>
</protein>
<proteinExistence type="inferred from homology"/>